<evidence type="ECO:0000255" key="1">
    <source>
        <dbReference type="HAMAP-Rule" id="MF_00044"/>
    </source>
</evidence>
<gene>
    <name evidence="1" type="primary">aspS</name>
    <name type="ordered locus">Cvib_1052</name>
</gene>
<sequence>MTNAAGSSSALQNRFRTHYCGSLGPVLQQEKVSLAGWVHRIRDHGGLVFIDLRDHTGICQLVIQPEEKELFEQASHLHAESVIAIEGSVVLRSPETVNARLASGAIEVVVSALTVESNARPLPFPVADELPTSEELRLKYRFIDLRREKIHENIIFRSRVSSAIRRYLEERDFVEIQTPILTSSSPEGARDFLVPSRLHPGKFYALPQAPQQFKQLLMVAGFPRYFQIAPCFRDEDARADRSPGEFYQLDMEMAFIEQDDLFEILEGMFRHLVTSMSKKRITAFPFPRISYRDVMNRFGTDKPDLRIPLEIADVTPLFVNSGFKVFAANTKEGCAVKALVLKGRGTESRLFYDKAEKRAKELGSAGLAYIQFREEGLKGPIVKFMSEGEIASMKEQLSLETGDVVFFAAGKWEAACRIMGGMRTYFGELFTLDHDELSFCWIVDFPMYEYNEEAGKIDFSHNPFSMPQGEMEALETMDPLELLAYQYDIVCNGIELSSGAIRNHRPDIMYRAFEIAGYSKEDVDLRFGHMIEAFKLGAPPHGGIAPGLDRLVMILRDEQNIREVIAFPMNQQAEDLMMSAPSEVTTAQLRELHIKLDLPKED</sequence>
<comment type="function">
    <text evidence="1">Aspartyl-tRNA synthetase with relaxed tRNA specificity since it is able to aspartylate not only its cognate tRNA(Asp) but also tRNA(Asn). Reaction proceeds in two steps: L-aspartate is first activated by ATP to form Asp-AMP and then transferred to the acceptor end of tRNA(Asp/Asn).</text>
</comment>
<comment type="catalytic activity">
    <reaction evidence="1">
        <text>tRNA(Asx) + L-aspartate + ATP = L-aspartyl-tRNA(Asx) + AMP + diphosphate</text>
        <dbReference type="Rhea" id="RHEA:18349"/>
        <dbReference type="Rhea" id="RHEA-COMP:9710"/>
        <dbReference type="Rhea" id="RHEA-COMP:9711"/>
        <dbReference type="ChEBI" id="CHEBI:29991"/>
        <dbReference type="ChEBI" id="CHEBI:30616"/>
        <dbReference type="ChEBI" id="CHEBI:33019"/>
        <dbReference type="ChEBI" id="CHEBI:78442"/>
        <dbReference type="ChEBI" id="CHEBI:78516"/>
        <dbReference type="ChEBI" id="CHEBI:456215"/>
        <dbReference type="EC" id="6.1.1.23"/>
    </reaction>
</comment>
<comment type="subunit">
    <text evidence="1">Homodimer.</text>
</comment>
<comment type="subcellular location">
    <subcellularLocation>
        <location evidence="1">Cytoplasm</location>
    </subcellularLocation>
</comment>
<comment type="similarity">
    <text evidence="1">Belongs to the class-II aminoacyl-tRNA synthetase family. Type 1 subfamily.</text>
</comment>
<proteinExistence type="inferred from homology"/>
<accession>A4SF07</accession>
<dbReference type="EC" id="6.1.1.23" evidence="1"/>
<dbReference type="EMBL" id="CP000607">
    <property type="protein sequence ID" value="ABP37066.1"/>
    <property type="molecule type" value="Genomic_DNA"/>
</dbReference>
<dbReference type="SMR" id="A4SF07"/>
<dbReference type="STRING" id="290318.Cvib_1052"/>
<dbReference type="KEGG" id="pvi:Cvib_1052"/>
<dbReference type="eggNOG" id="COG0173">
    <property type="taxonomic scope" value="Bacteria"/>
</dbReference>
<dbReference type="HOGENOM" id="CLU_014330_3_2_10"/>
<dbReference type="OrthoDB" id="9802326at2"/>
<dbReference type="GO" id="GO:0005737">
    <property type="term" value="C:cytoplasm"/>
    <property type="evidence" value="ECO:0007669"/>
    <property type="project" value="UniProtKB-SubCell"/>
</dbReference>
<dbReference type="GO" id="GO:0004815">
    <property type="term" value="F:aspartate-tRNA ligase activity"/>
    <property type="evidence" value="ECO:0007669"/>
    <property type="project" value="UniProtKB-UniRule"/>
</dbReference>
<dbReference type="GO" id="GO:0050560">
    <property type="term" value="F:aspartate-tRNA(Asn) ligase activity"/>
    <property type="evidence" value="ECO:0007669"/>
    <property type="project" value="UniProtKB-EC"/>
</dbReference>
<dbReference type="GO" id="GO:0005524">
    <property type="term" value="F:ATP binding"/>
    <property type="evidence" value="ECO:0007669"/>
    <property type="project" value="UniProtKB-UniRule"/>
</dbReference>
<dbReference type="GO" id="GO:0003676">
    <property type="term" value="F:nucleic acid binding"/>
    <property type="evidence" value="ECO:0007669"/>
    <property type="project" value="InterPro"/>
</dbReference>
<dbReference type="GO" id="GO:0006422">
    <property type="term" value="P:aspartyl-tRNA aminoacylation"/>
    <property type="evidence" value="ECO:0007669"/>
    <property type="project" value="UniProtKB-UniRule"/>
</dbReference>
<dbReference type="CDD" id="cd00777">
    <property type="entry name" value="AspRS_core"/>
    <property type="match status" value="1"/>
</dbReference>
<dbReference type="CDD" id="cd04317">
    <property type="entry name" value="EcAspRS_like_N"/>
    <property type="match status" value="1"/>
</dbReference>
<dbReference type="Gene3D" id="3.30.930.10">
    <property type="entry name" value="Bira Bifunctional Protein, Domain 2"/>
    <property type="match status" value="1"/>
</dbReference>
<dbReference type="Gene3D" id="3.30.1360.30">
    <property type="entry name" value="GAD-like domain"/>
    <property type="match status" value="1"/>
</dbReference>
<dbReference type="Gene3D" id="2.40.50.140">
    <property type="entry name" value="Nucleic acid-binding proteins"/>
    <property type="match status" value="1"/>
</dbReference>
<dbReference type="HAMAP" id="MF_00044">
    <property type="entry name" value="Asp_tRNA_synth_type1"/>
    <property type="match status" value="1"/>
</dbReference>
<dbReference type="InterPro" id="IPR004364">
    <property type="entry name" value="Aa-tRNA-synt_II"/>
</dbReference>
<dbReference type="InterPro" id="IPR006195">
    <property type="entry name" value="aa-tRNA-synth_II"/>
</dbReference>
<dbReference type="InterPro" id="IPR045864">
    <property type="entry name" value="aa-tRNA-synth_II/BPL/LPL"/>
</dbReference>
<dbReference type="InterPro" id="IPR004524">
    <property type="entry name" value="Asp-tRNA-ligase_1"/>
</dbReference>
<dbReference type="InterPro" id="IPR047089">
    <property type="entry name" value="Asp-tRNA-ligase_1_N"/>
</dbReference>
<dbReference type="InterPro" id="IPR002312">
    <property type="entry name" value="Asp/Asn-tRNA-synth_IIb"/>
</dbReference>
<dbReference type="InterPro" id="IPR047090">
    <property type="entry name" value="AspRS_core"/>
</dbReference>
<dbReference type="InterPro" id="IPR004115">
    <property type="entry name" value="GAD-like_sf"/>
</dbReference>
<dbReference type="InterPro" id="IPR029351">
    <property type="entry name" value="GAD_dom"/>
</dbReference>
<dbReference type="InterPro" id="IPR012340">
    <property type="entry name" value="NA-bd_OB-fold"/>
</dbReference>
<dbReference type="InterPro" id="IPR004365">
    <property type="entry name" value="NA-bd_OB_tRNA"/>
</dbReference>
<dbReference type="NCBIfam" id="TIGR00459">
    <property type="entry name" value="aspS_bact"/>
    <property type="match status" value="1"/>
</dbReference>
<dbReference type="NCBIfam" id="NF001750">
    <property type="entry name" value="PRK00476.1"/>
    <property type="match status" value="1"/>
</dbReference>
<dbReference type="PANTHER" id="PTHR22594:SF5">
    <property type="entry name" value="ASPARTATE--TRNA LIGASE, MITOCHONDRIAL"/>
    <property type="match status" value="1"/>
</dbReference>
<dbReference type="PANTHER" id="PTHR22594">
    <property type="entry name" value="ASPARTYL/LYSYL-TRNA SYNTHETASE"/>
    <property type="match status" value="1"/>
</dbReference>
<dbReference type="Pfam" id="PF02938">
    <property type="entry name" value="GAD"/>
    <property type="match status" value="1"/>
</dbReference>
<dbReference type="Pfam" id="PF00152">
    <property type="entry name" value="tRNA-synt_2"/>
    <property type="match status" value="1"/>
</dbReference>
<dbReference type="Pfam" id="PF01336">
    <property type="entry name" value="tRNA_anti-codon"/>
    <property type="match status" value="1"/>
</dbReference>
<dbReference type="PRINTS" id="PR01042">
    <property type="entry name" value="TRNASYNTHASP"/>
</dbReference>
<dbReference type="SUPFAM" id="SSF55681">
    <property type="entry name" value="Class II aaRS and biotin synthetases"/>
    <property type="match status" value="1"/>
</dbReference>
<dbReference type="SUPFAM" id="SSF55261">
    <property type="entry name" value="GAD domain-like"/>
    <property type="match status" value="1"/>
</dbReference>
<dbReference type="SUPFAM" id="SSF50249">
    <property type="entry name" value="Nucleic acid-binding proteins"/>
    <property type="match status" value="1"/>
</dbReference>
<dbReference type="PROSITE" id="PS50862">
    <property type="entry name" value="AA_TRNA_LIGASE_II"/>
    <property type="match status" value="1"/>
</dbReference>
<reference key="1">
    <citation type="submission" date="2007-03" db="EMBL/GenBank/DDBJ databases">
        <title>Complete sequence of Prosthecochloris vibrioformis DSM 265.</title>
        <authorList>
            <consortium name="US DOE Joint Genome Institute"/>
            <person name="Copeland A."/>
            <person name="Lucas S."/>
            <person name="Lapidus A."/>
            <person name="Barry K."/>
            <person name="Detter J.C."/>
            <person name="Glavina del Rio T."/>
            <person name="Hammon N."/>
            <person name="Israni S."/>
            <person name="Pitluck S."/>
            <person name="Schmutz J."/>
            <person name="Larimer F."/>
            <person name="Land M."/>
            <person name="Hauser L."/>
            <person name="Mikhailova N."/>
            <person name="Li T."/>
            <person name="Overmann J."/>
            <person name="Schuster S.C."/>
            <person name="Bryant D.A."/>
            <person name="Richardson P."/>
        </authorList>
    </citation>
    <scope>NUCLEOTIDE SEQUENCE [LARGE SCALE GENOMIC DNA]</scope>
    <source>
        <strain>DSM 265 / 1930</strain>
    </source>
</reference>
<protein>
    <recommendedName>
        <fullName evidence="1">Aspartate--tRNA(Asp/Asn) ligase</fullName>
        <ecNumber evidence="1">6.1.1.23</ecNumber>
    </recommendedName>
    <alternativeName>
        <fullName evidence="1">Aspartyl-tRNA synthetase</fullName>
        <shortName evidence="1">AspRS</shortName>
    </alternativeName>
    <alternativeName>
        <fullName evidence="1">Non-discriminating aspartyl-tRNA synthetase</fullName>
        <shortName evidence="1">ND-AspRS</shortName>
    </alternativeName>
</protein>
<feature type="chain" id="PRO_1000074713" description="Aspartate--tRNA(Asp/Asn) ligase">
    <location>
        <begin position="1"/>
        <end position="602"/>
    </location>
</feature>
<feature type="region of interest" description="Aspartate" evidence="1">
    <location>
        <begin position="211"/>
        <end position="214"/>
    </location>
</feature>
<feature type="binding site" evidence="1">
    <location>
        <position position="187"/>
    </location>
    <ligand>
        <name>L-aspartate</name>
        <dbReference type="ChEBI" id="CHEBI:29991"/>
    </ligand>
</feature>
<feature type="binding site" evidence="1">
    <location>
        <begin position="233"/>
        <end position="235"/>
    </location>
    <ligand>
        <name>ATP</name>
        <dbReference type="ChEBI" id="CHEBI:30616"/>
    </ligand>
</feature>
<feature type="binding site" evidence="1">
    <location>
        <position position="233"/>
    </location>
    <ligand>
        <name>L-aspartate</name>
        <dbReference type="ChEBI" id="CHEBI:29991"/>
    </ligand>
</feature>
<feature type="binding site" evidence="1">
    <location>
        <position position="461"/>
    </location>
    <ligand>
        <name>L-aspartate</name>
        <dbReference type="ChEBI" id="CHEBI:29991"/>
    </ligand>
</feature>
<feature type="binding site" evidence="1">
    <location>
        <position position="495"/>
    </location>
    <ligand>
        <name>ATP</name>
        <dbReference type="ChEBI" id="CHEBI:30616"/>
    </ligand>
</feature>
<feature type="binding site" evidence="1">
    <location>
        <position position="502"/>
    </location>
    <ligand>
        <name>L-aspartate</name>
        <dbReference type="ChEBI" id="CHEBI:29991"/>
    </ligand>
</feature>
<feature type="binding site" evidence="1">
    <location>
        <begin position="547"/>
        <end position="550"/>
    </location>
    <ligand>
        <name>ATP</name>
        <dbReference type="ChEBI" id="CHEBI:30616"/>
    </ligand>
</feature>
<feature type="site" description="Important for tRNA non-discrimination" evidence="1">
    <location>
        <position position="44"/>
    </location>
</feature>
<keyword id="KW-0030">Aminoacyl-tRNA synthetase</keyword>
<keyword id="KW-0067">ATP-binding</keyword>
<keyword id="KW-0963">Cytoplasm</keyword>
<keyword id="KW-0436">Ligase</keyword>
<keyword id="KW-0547">Nucleotide-binding</keyword>
<keyword id="KW-0648">Protein biosynthesis</keyword>
<name>SYDND_CHLPM</name>
<organism>
    <name type="scientific">Chlorobium phaeovibrioides (strain DSM 265 / 1930)</name>
    <name type="common">Prosthecochloris vibrioformis (strain DSM 265)</name>
    <dbReference type="NCBI Taxonomy" id="290318"/>
    <lineage>
        <taxon>Bacteria</taxon>
        <taxon>Pseudomonadati</taxon>
        <taxon>Chlorobiota</taxon>
        <taxon>Chlorobiia</taxon>
        <taxon>Chlorobiales</taxon>
        <taxon>Chlorobiaceae</taxon>
        <taxon>Chlorobium/Pelodictyon group</taxon>
        <taxon>Chlorobium</taxon>
    </lineage>
</organism>